<comment type="function">
    <text evidence="1">Part of the Sec protein translocase complex. Interacts with the SecYEG preprotein conducting channel. Has a central role in coupling the hydrolysis of ATP to the transfer of proteins into and across the cell membrane, serving both as a receptor for the preprotein-SecB complex and as an ATP-driven molecular motor driving the stepwise translocation of polypeptide chains across the membrane.</text>
</comment>
<comment type="catalytic activity">
    <reaction evidence="1">
        <text>ATP + H2O + cellular proteinSide 1 = ADP + phosphate + cellular proteinSide 2.</text>
        <dbReference type="EC" id="7.4.2.8"/>
    </reaction>
</comment>
<comment type="cofactor">
    <cofactor evidence="1">
        <name>Zn(2+)</name>
        <dbReference type="ChEBI" id="CHEBI:29105"/>
    </cofactor>
    <text evidence="1">May bind 1 zinc ion per subunit.</text>
</comment>
<comment type="subunit">
    <text evidence="1">Monomer and homodimer. Part of the essential Sec protein translocation apparatus which comprises SecA, SecYEG and auxiliary proteins SecDF-YajC and YidC.</text>
</comment>
<comment type="subcellular location">
    <subcellularLocation>
        <location evidence="1">Cell inner membrane</location>
        <topology evidence="1">Peripheral membrane protein</topology>
        <orientation evidence="1">Cytoplasmic side</orientation>
    </subcellularLocation>
    <subcellularLocation>
        <location evidence="1">Cytoplasm</location>
    </subcellularLocation>
    <text evidence="1">Distribution is 50-50.</text>
</comment>
<comment type="similarity">
    <text evidence="1">Belongs to the SecA family.</text>
</comment>
<organism>
    <name type="scientific">Shewanella sp. (strain ANA-3)</name>
    <dbReference type="NCBI Taxonomy" id="94122"/>
    <lineage>
        <taxon>Bacteria</taxon>
        <taxon>Pseudomonadati</taxon>
        <taxon>Pseudomonadota</taxon>
        <taxon>Gammaproteobacteria</taxon>
        <taxon>Alteromonadales</taxon>
        <taxon>Shewanellaceae</taxon>
        <taxon>Shewanella</taxon>
    </lineage>
</organism>
<name>SECA_SHESA</name>
<protein>
    <recommendedName>
        <fullName evidence="1">Protein translocase subunit SecA</fullName>
        <ecNumber evidence="1">7.4.2.8</ecNumber>
    </recommendedName>
</protein>
<dbReference type="EC" id="7.4.2.8" evidence="1"/>
<dbReference type="EMBL" id="CP000469">
    <property type="protein sequence ID" value="ABK49953.1"/>
    <property type="molecule type" value="Genomic_DNA"/>
</dbReference>
<dbReference type="RefSeq" id="WP_011718491.1">
    <property type="nucleotide sequence ID" value="NC_008577.1"/>
</dbReference>
<dbReference type="SMR" id="A0L1N4"/>
<dbReference type="STRING" id="94122.Shewana3_3735"/>
<dbReference type="GeneID" id="94729666"/>
<dbReference type="KEGG" id="shn:Shewana3_3735"/>
<dbReference type="eggNOG" id="COG0653">
    <property type="taxonomic scope" value="Bacteria"/>
</dbReference>
<dbReference type="HOGENOM" id="CLU_005314_3_0_6"/>
<dbReference type="OrthoDB" id="9805579at2"/>
<dbReference type="Proteomes" id="UP000002589">
    <property type="component" value="Chromosome"/>
</dbReference>
<dbReference type="GO" id="GO:0031522">
    <property type="term" value="C:cell envelope Sec protein transport complex"/>
    <property type="evidence" value="ECO:0007669"/>
    <property type="project" value="TreeGrafter"/>
</dbReference>
<dbReference type="GO" id="GO:0005829">
    <property type="term" value="C:cytosol"/>
    <property type="evidence" value="ECO:0007669"/>
    <property type="project" value="TreeGrafter"/>
</dbReference>
<dbReference type="GO" id="GO:0005886">
    <property type="term" value="C:plasma membrane"/>
    <property type="evidence" value="ECO:0007669"/>
    <property type="project" value="UniProtKB-SubCell"/>
</dbReference>
<dbReference type="GO" id="GO:0005524">
    <property type="term" value="F:ATP binding"/>
    <property type="evidence" value="ECO:0007669"/>
    <property type="project" value="UniProtKB-UniRule"/>
</dbReference>
<dbReference type="GO" id="GO:0046872">
    <property type="term" value="F:metal ion binding"/>
    <property type="evidence" value="ECO:0007669"/>
    <property type="project" value="UniProtKB-KW"/>
</dbReference>
<dbReference type="GO" id="GO:0008564">
    <property type="term" value="F:protein-exporting ATPase activity"/>
    <property type="evidence" value="ECO:0007669"/>
    <property type="project" value="UniProtKB-EC"/>
</dbReference>
<dbReference type="GO" id="GO:0065002">
    <property type="term" value="P:intracellular protein transmembrane transport"/>
    <property type="evidence" value="ECO:0007669"/>
    <property type="project" value="UniProtKB-UniRule"/>
</dbReference>
<dbReference type="GO" id="GO:0017038">
    <property type="term" value="P:protein import"/>
    <property type="evidence" value="ECO:0007669"/>
    <property type="project" value="InterPro"/>
</dbReference>
<dbReference type="GO" id="GO:0006605">
    <property type="term" value="P:protein targeting"/>
    <property type="evidence" value="ECO:0007669"/>
    <property type="project" value="UniProtKB-UniRule"/>
</dbReference>
<dbReference type="GO" id="GO:0043952">
    <property type="term" value="P:protein transport by the Sec complex"/>
    <property type="evidence" value="ECO:0007669"/>
    <property type="project" value="TreeGrafter"/>
</dbReference>
<dbReference type="CDD" id="cd17928">
    <property type="entry name" value="DEXDc_SecA"/>
    <property type="match status" value="1"/>
</dbReference>
<dbReference type="CDD" id="cd18803">
    <property type="entry name" value="SF2_C_secA"/>
    <property type="match status" value="1"/>
</dbReference>
<dbReference type="FunFam" id="1.10.3060.10:FF:000001">
    <property type="entry name" value="Preprotein translocase subunit SecA"/>
    <property type="match status" value="1"/>
</dbReference>
<dbReference type="FunFam" id="3.40.50.300:FF:000081">
    <property type="entry name" value="Preprotein translocase subunit SecA"/>
    <property type="match status" value="1"/>
</dbReference>
<dbReference type="FunFam" id="3.40.50.300:FF:000113">
    <property type="entry name" value="Preprotein translocase subunit SecA"/>
    <property type="match status" value="1"/>
</dbReference>
<dbReference type="FunFam" id="3.90.1440.10:FF:000001">
    <property type="entry name" value="Preprotein translocase subunit SecA"/>
    <property type="match status" value="1"/>
</dbReference>
<dbReference type="Gene3D" id="1.10.3060.10">
    <property type="entry name" value="Helical scaffold and wing domains of SecA"/>
    <property type="match status" value="1"/>
</dbReference>
<dbReference type="Gene3D" id="3.40.50.300">
    <property type="entry name" value="P-loop containing nucleotide triphosphate hydrolases"/>
    <property type="match status" value="2"/>
</dbReference>
<dbReference type="Gene3D" id="3.90.1440.10">
    <property type="entry name" value="SecA, preprotein cross-linking domain"/>
    <property type="match status" value="1"/>
</dbReference>
<dbReference type="HAMAP" id="MF_01382">
    <property type="entry name" value="SecA"/>
    <property type="match status" value="1"/>
</dbReference>
<dbReference type="InterPro" id="IPR014001">
    <property type="entry name" value="Helicase_ATP-bd"/>
</dbReference>
<dbReference type="InterPro" id="IPR001650">
    <property type="entry name" value="Helicase_C-like"/>
</dbReference>
<dbReference type="InterPro" id="IPR027417">
    <property type="entry name" value="P-loop_NTPase"/>
</dbReference>
<dbReference type="InterPro" id="IPR004027">
    <property type="entry name" value="SEC_C_motif"/>
</dbReference>
<dbReference type="InterPro" id="IPR000185">
    <property type="entry name" value="SecA"/>
</dbReference>
<dbReference type="InterPro" id="IPR020937">
    <property type="entry name" value="SecA_CS"/>
</dbReference>
<dbReference type="InterPro" id="IPR011115">
    <property type="entry name" value="SecA_DEAD"/>
</dbReference>
<dbReference type="InterPro" id="IPR014018">
    <property type="entry name" value="SecA_motor_DEAD"/>
</dbReference>
<dbReference type="InterPro" id="IPR011130">
    <property type="entry name" value="SecA_preprotein_X-link_dom"/>
</dbReference>
<dbReference type="InterPro" id="IPR044722">
    <property type="entry name" value="SecA_SF2_C"/>
</dbReference>
<dbReference type="InterPro" id="IPR011116">
    <property type="entry name" value="SecA_Wing/Scaffold"/>
</dbReference>
<dbReference type="InterPro" id="IPR036266">
    <property type="entry name" value="SecA_Wing/Scaffold_sf"/>
</dbReference>
<dbReference type="InterPro" id="IPR036670">
    <property type="entry name" value="SecA_X-link_sf"/>
</dbReference>
<dbReference type="NCBIfam" id="NF009538">
    <property type="entry name" value="PRK12904.1"/>
    <property type="match status" value="1"/>
</dbReference>
<dbReference type="NCBIfam" id="TIGR00963">
    <property type="entry name" value="secA"/>
    <property type="match status" value="1"/>
</dbReference>
<dbReference type="PANTHER" id="PTHR30612:SF0">
    <property type="entry name" value="CHLOROPLAST PROTEIN-TRANSPORTING ATPASE"/>
    <property type="match status" value="1"/>
</dbReference>
<dbReference type="PANTHER" id="PTHR30612">
    <property type="entry name" value="SECA INNER MEMBRANE COMPONENT OF SEC PROTEIN SECRETION SYSTEM"/>
    <property type="match status" value="1"/>
</dbReference>
<dbReference type="Pfam" id="PF21090">
    <property type="entry name" value="P-loop_SecA"/>
    <property type="match status" value="1"/>
</dbReference>
<dbReference type="Pfam" id="PF02810">
    <property type="entry name" value="SEC-C"/>
    <property type="match status" value="1"/>
</dbReference>
<dbReference type="Pfam" id="PF07517">
    <property type="entry name" value="SecA_DEAD"/>
    <property type="match status" value="1"/>
</dbReference>
<dbReference type="Pfam" id="PF01043">
    <property type="entry name" value="SecA_PP_bind"/>
    <property type="match status" value="1"/>
</dbReference>
<dbReference type="Pfam" id="PF07516">
    <property type="entry name" value="SecA_SW"/>
    <property type="match status" value="1"/>
</dbReference>
<dbReference type="PRINTS" id="PR00906">
    <property type="entry name" value="SECA"/>
</dbReference>
<dbReference type="SMART" id="SM00957">
    <property type="entry name" value="SecA_DEAD"/>
    <property type="match status" value="1"/>
</dbReference>
<dbReference type="SMART" id="SM00958">
    <property type="entry name" value="SecA_PP_bind"/>
    <property type="match status" value="1"/>
</dbReference>
<dbReference type="SUPFAM" id="SSF81886">
    <property type="entry name" value="Helical scaffold and wing domains of SecA"/>
    <property type="match status" value="1"/>
</dbReference>
<dbReference type="SUPFAM" id="SSF52540">
    <property type="entry name" value="P-loop containing nucleoside triphosphate hydrolases"/>
    <property type="match status" value="2"/>
</dbReference>
<dbReference type="SUPFAM" id="SSF81767">
    <property type="entry name" value="Pre-protein crosslinking domain of SecA"/>
    <property type="match status" value="1"/>
</dbReference>
<dbReference type="PROSITE" id="PS01312">
    <property type="entry name" value="SECA"/>
    <property type="match status" value="1"/>
</dbReference>
<dbReference type="PROSITE" id="PS51196">
    <property type="entry name" value="SECA_MOTOR_DEAD"/>
    <property type="match status" value="1"/>
</dbReference>
<reference key="1">
    <citation type="submission" date="2006-09" db="EMBL/GenBank/DDBJ databases">
        <title>Complete sequence of chromosome 1 of Shewanella sp. ANA-3.</title>
        <authorList>
            <person name="Copeland A."/>
            <person name="Lucas S."/>
            <person name="Lapidus A."/>
            <person name="Barry K."/>
            <person name="Detter J.C."/>
            <person name="Glavina del Rio T."/>
            <person name="Hammon N."/>
            <person name="Israni S."/>
            <person name="Dalin E."/>
            <person name="Tice H."/>
            <person name="Pitluck S."/>
            <person name="Chertkov O."/>
            <person name="Brettin T."/>
            <person name="Bruce D."/>
            <person name="Han C."/>
            <person name="Tapia R."/>
            <person name="Gilna P."/>
            <person name="Schmutz J."/>
            <person name="Larimer F."/>
            <person name="Land M."/>
            <person name="Hauser L."/>
            <person name="Kyrpides N."/>
            <person name="Kim E."/>
            <person name="Newman D."/>
            <person name="Salticov C."/>
            <person name="Konstantinidis K."/>
            <person name="Klappenback J."/>
            <person name="Tiedje J."/>
            <person name="Richardson P."/>
        </authorList>
    </citation>
    <scope>NUCLEOTIDE SEQUENCE [LARGE SCALE GENOMIC DNA]</scope>
    <source>
        <strain>ANA-3</strain>
    </source>
</reference>
<feature type="chain" id="PRO_0000320997" description="Protein translocase subunit SecA">
    <location>
        <begin position="1"/>
        <end position="908"/>
    </location>
</feature>
<feature type="region of interest" description="Disordered" evidence="2">
    <location>
        <begin position="865"/>
        <end position="908"/>
    </location>
</feature>
<feature type="compositionally biased region" description="Basic and acidic residues" evidence="2">
    <location>
        <begin position="879"/>
        <end position="888"/>
    </location>
</feature>
<feature type="compositionally biased region" description="Basic residues" evidence="2">
    <location>
        <begin position="898"/>
        <end position="908"/>
    </location>
</feature>
<feature type="binding site" evidence="1">
    <location>
        <position position="87"/>
    </location>
    <ligand>
        <name>ATP</name>
        <dbReference type="ChEBI" id="CHEBI:30616"/>
    </ligand>
</feature>
<feature type="binding site" evidence="1">
    <location>
        <begin position="105"/>
        <end position="109"/>
    </location>
    <ligand>
        <name>ATP</name>
        <dbReference type="ChEBI" id="CHEBI:30616"/>
    </ligand>
</feature>
<feature type="binding site" evidence="1">
    <location>
        <position position="512"/>
    </location>
    <ligand>
        <name>ATP</name>
        <dbReference type="ChEBI" id="CHEBI:30616"/>
    </ligand>
</feature>
<feature type="binding site" evidence="1">
    <location>
        <position position="892"/>
    </location>
    <ligand>
        <name>Zn(2+)</name>
        <dbReference type="ChEBI" id="CHEBI:29105"/>
    </ligand>
</feature>
<feature type="binding site" evidence="1">
    <location>
        <position position="894"/>
    </location>
    <ligand>
        <name>Zn(2+)</name>
        <dbReference type="ChEBI" id="CHEBI:29105"/>
    </ligand>
</feature>
<feature type="binding site" evidence="1">
    <location>
        <position position="903"/>
    </location>
    <ligand>
        <name>Zn(2+)</name>
        <dbReference type="ChEBI" id="CHEBI:29105"/>
    </ligand>
</feature>
<feature type="binding site" evidence="1">
    <location>
        <position position="904"/>
    </location>
    <ligand>
        <name>Zn(2+)</name>
        <dbReference type="ChEBI" id="CHEBI:29105"/>
    </ligand>
</feature>
<gene>
    <name evidence="1" type="primary">secA</name>
    <name type="ordered locus">Shewana3_3735</name>
</gene>
<accession>A0L1N4</accession>
<sequence>MFGKLLTKVFGSRNDRTLKGLQKVVNKINALEADYEKLTDEQLKAKTAEFRERLAAGASLESIMAEAFATVREASKRVFEMRHFDVQLLGGMVLDSNRIAEMRTGEGKTLTATLPAYLNALTGKGVHVITVNDYLARRDAENNRPLFEFLGLTVGINVAGLGQQAKKDAYNADITYGTNNEFGFDYLRDNMAFSPQERVQRPLHYALIDEVDSILIDEARTPLIISGAAEDSSELYIKINTLIPSLIRQDKEDSEEYVGEGDYSIDEKAKQVHFTERGQEKVENLLIERGMLAEGDSLYSAANISLLHHVNAALRAHTLFERDVDYIVQDGEVIIVDEHTGRTMPGRRWSEGLHQAVEAKEGVRIQNENQTLASITFQNYFRLYEKLAGMTGTADTEAFEFQHIYGLDTVVVPTNRPMVRKDMADLVYLTANEKYQAIIKDIKDCRERGQPVLVGTVSIEQSELLARLMVKEKIPHQVLNAKFHEKEAEIVAQAGRTGAVTIATNMAGRGTDIVLGGNWNMEIEALENPTAEQKAKIKADWQERHDAVVAAGGLHILGTERHESRRIDNQLRGRAGRQGDAGSSRFYLSMEDSLMRIFASDRVSGMMKKLGMEEGEAIEHPWVSRAIENAQRKVEARNFDIRKQLLEFDDVANDQRQVVYAQRNELMDAESIEDTIKNIQDDVISAVIDQYIPPQSVEELWDVPGLEQRLQQEFMLKLPIQEWLDKEDDLHEETLRERIITSWSDAYKAKEEMVGAPVLRQFEKAVMLQTLDGLWKEHLAAMDHLRQGIHLRGYAQKNPKQEYKRESFELFQQLLSTLKHDVISVLSKVQVQAQSDVEEMEARRREEDAKIQRDYQHAAAEALVGGDDGSDEMMAHTPMIRDGDKVGRNDPCPCGSGRKYKQCHGKLS</sequence>
<proteinExistence type="inferred from homology"/>
<keyword id="KW-0067">ATP-binding</keyword>
<keyword id="KW-0997">Cell inner membrane</keyword>
<keyword id="KW-1003">Cell membrane</keyword>
<keyword id="KW-0963">Cytoplasm</keyword>
<keyword id="KW-0472">Membrane</keyword>
<keyword id="KW-0479">Metal-binding</keyword>
<keyword id="KW-0547">Nucleotide-binding</keyword>
<keyword id="KW-0653">Protein transport</keyword>
<keyword id="KW-1278">Translocase</keyword>
<keyword id="KW-0811">Translocation</keyword>
<keyword id="KW-0813">Transport</keyword>
<keyword id="KW-0862">Zinc</keyword>
<evidence type="ECO:0000255" key="1">
    <source>
        <dbReference type="HAMAP-Rule" id="MF_01382"/>
    </source>
</evidence>
<evidence type="ECO:0000256" key="2">
    <source>
        <dbReference type="SAM" id="MobiDB-lite"/>
    </source>
</evidence>